<accession>Q75HJ0</accession>
<accession>B9F6K1</accession>
<accession>Q9MAW9</accession>
<feature type="chain" id="PRO_0000282449" description="DEAD-box ATP-dependent RNA helicase 37">
    <location>
        <begin position="1"/>
        <end position="637"/>
    </location>
</feature>
<feature type="domain" description="Helicase ATP-binding" evidence="1">
    <location>
        <begin position="205"/>
        <end position="389"/>
    </location>
</feature>
<feature type="domain" description="Helicase C-terminal" evidence="2">
    <location>
        <begin position="416"/>
        <end position="567"/>
    </location>
</feature>
<feature type="region of interest" description="Disordered" evidence="3">
    <location>
        <begin position="1"/>
        <end position="68"/>
    </location>
</feature>
<feature type="region of interest" description="Disordered" evidence="3">
    <location>
        <begin position="86"/>
        <end position="141"/>
    </location>
</feature>
<feature type="region of interest" description="Disordered" evidence="3">
    <location>
        <begin position="570"/>
        <end position="610"/>
    </location>
</feature>
<feature type="short sequence motif" description="Q motif">
    <location>
        <begin position="174"/>
        <end position="202"/>
    </location>
</feature>
<feature type="short sequence motif" description="DEAD box">
    <location>
        <begin position="333"/>
        <end position="336"/>
    </location>
</feature>
<feature type="compositionally biased region" description="Low complexity" evidence="3">
    <location>
        <begin position="10"/>
        <end position="28"/>
    </location>
</feature>
<feature type="compositionally biased region" description="Low complexity" evidence="3">
    <location>
        <begin position="46"/>
        <end position="68"/>
    </location>
</feature>
<feature type="compositionally biased region" description="Gly residues" evidence="3">
    <location>
        <begin position="104"/>
        <end position="116"/>
    </location>
</feature>
<feature type="compositionally biased region" description="Basic and acidic residues" evidence="3">
    <location>
        <begin position="588"/>
        <end position="597"/>
    </location>
</feature>
<feature type="compositionally biased region" description="Gly residues" evidence="3">
    <location>
        <begin position="598"/>
        <end position="610"/>
    </location>
</feature>
<feature type="binding site" evidence="1">
    <location>
        <begin position="218"/>
        <end position="225"/>
    </location>
    <ligand>
        <name>ATP</name>
        <dbReference type="ChEBI" id="CHEBI:30616"/>
    </ligand>
</feature>
<feature type="sequence conflict" description="In Ref. 6; AK066048." evidence="4" ref="6">
    <original>E</original>
    <variation>G</variation>
    <location>
        <position position="300"/>
    </location>
</feature>
<feature type="sequence conflict" description="In Ref. 6; AK066048." evidence="4" ref="6">
    <original>R</original>
    <variation>G</variation>
    <location>
        <position position="362"/>
    </location>
</feature>
<name>RH37_ORYSJ</name>
<proteinExistence type="evidence at transcript level"/>
<dbReference type="EC" id="3.6.4.13"/>
<dbReference type="EMBL" id="AC135563">
    <property type="protein sequence ID" value="AAS07217.1"/>
    <property type="molecule type" value="Genomic_DNA"/>
</dbReference>
<dbReference type="EMBL" id="DP000009">
    <property type="protein sequence ID" value="ABF99430.1"/>
    <property type="molecule type" value="Genomic_DNA"/>
</dbReference>
<dbReference type="EMBL" id="AP008209">
    <property type="protein sequence ID" value="BAF13540.1"/>
    <property type="molecule type" value="Genomic_DNA"/>
</dbReference>
<dbReference type="EMBL" id="AP014959">
    <property type="protein sequence ID" value="BAS86934.1"/>
    <property type="molecule type" value="Genomic_DNA"/>
</dbReference>
<dbReference type="EMBL" id="CM000140">
    <property type="protein sequence ID" value="EEE60132.1"/>
    <property type="molecule type" value="Genomic_DNA"/>
</dbReference>
<dbReference type="EMBL" id="AK066048">
    <property type="status" value="NOT_ANNOTATED_CDS"/>
    <property type="molecule type" value="mRNA"/>
</dbReference>
<dbReference type="EMBL" id="AB042643">
    <property type="protein sequence ID" value="BAA95704.1"/>
    <property type="molecule type" value="mRNA"/>
</dbReference>
<dbReference type="RefSeq" id="XP_015630541.1">
    <property type="nucleotide sequence ID" value="XM_015775055.1"/>
</dbReference>
<dbReference type="SMR" id="Q75HJ0"/>
<dbReference type="FunCoup" id="Q75HJ0">
    <property type="interactions" value="2122"/>
</dbReference>
<dbReference type="STRING" id="39947.Q75HJ0"/>
<dbReference type="PaxDb" id="39947-Q75HJ0"/>
<dbReference type="EnsemblPlants" id="Os03t0805200-01">
    <property type="protein sequence ID" value="Os03t0805200-01"/>
    <property type="gene ID" value="Os03g0805200"/>
</dbReference>
<dbReference type="Gramene" id="Os03t0805200-01">
    <property type="protein sequence ID" value="Os03t0805200-01"/>
    <property type="gene ID" value="Os03g0805200"/>
</dbReference>
<dbReference type="KEGG" id="dosa:Os03g0805200"/>
<dbReference type="eggNOG" id="KOG0335">
    <property type="taxonomic scope" value="Eukaryota"/>
</dbReference>
<dbReference type="HOGENOM" id="CLU_003041_16_3_1"/>
<dbReference type="InParanoid" id="Q75HJ0"/>
<dbReference type="OMA" id="ISGNDRW"/>
<dbReference type="OrthoDB" id="196131at2759"/>
<dbReference type="Proteomes" id="UP000000763">
    <property type="component" value="Chromosome 3"/>
</dbReference>
<dbReference type="Proteomes" id="UP000007752">
    <property type="component" value="Chromosome 3"/>
</dbReference>
<dbReference type="Proteomes" id="UP000059680">
    <property type="component" value="Chromosome 3"/>
</dbReference>
<dbReference type="GO" id="GO:0005634">
    <property type="term" value="C:nucleus"/>
    <property type="evidence" value="ECO:0000318"/>
    <property type="project" value="GO_Central"/>
</dbReference>
<dbReference type="GO" id="GO:0005524">
    <property type="term" value="F:ATP binding"/>
    <property type="evidence" value="ECO:0007669"/>
    <property type="project" value="UniProtKB-KW"/>
</dbReference>
<dbReference type="GO" id="GO:0016887">
    <property type="term" value="F:ATP hydrolysis activity"/>
    <property type="evidence" value="ECO:0007669"/>
    <property type="project" value="RHEA"/>
</dbReference>
<dbReference type="GO" id="GO:0003729">
    <property type="term" value="F:mRNA binding"/>
    <property type="evidence" value="ECO:0000318"/>
    <property type="project" value="GO_Central"/>
</dbReference>
<dbReference type="GO" id="GO:0003724">
    <property type="term" value="F:RNA helicase activity"/>
    <property type="evidence" value="ECO:0000318"/>
    <property type="project" value="GO_Central"/>
</dbReference>
<dbReference type="CDD" id="cd17967">
    <property type="entry name" value="DEADc_DDX3_DDX4"/>
    <property type="match status" value="1"/>
</dbReference>
<dbReference type="CDD" id="cd18787">
    <property type="entry name" value="SF2_C_DEAD"/>
    <property type="match status" value="1"/>
</dbReference>
<dbReference type="FunFam" id="3.40.50.300:FF:000008">
    <property type="entry name" value="ATP-dependent RNA helicase RhlB"/>
    <property type="match status" value="1"/>
</dbReference>
<dbReference type="FunFam" id="3.40.50.300:FF:000397">
    <property type="entry name" value="Probable ATP-dependent RNA helicase DDX4"/>
    <property type="match status" value="1"/>
</dbReference>
<dbReference type="Gene3D" id="3.40.50.300">
    <property type="entry name" value="P-loop containing nucleotide triphosphate hydrolases"/>
    <property type="match status" value="2"/>
</dbReference>
<dbReference type="InterPro" id="IPR011545">
    <property type="entry name" value="DEAD/DEAH_box_helicase_dom"/>
</dbReference>
<dbReference type="InterPro" id="IPR044763">
    <property type="entry name" value="Ded1/Dbp1_DEADc"/>
</dbReference>
<dbReference type="InterPro" id="IPR014001">
    <property type="entry name" value="Helicase_ATP-bd"/>
</dbReference>
<dbReference type="InterPro" id="IPR001650">
    <property type="entry name" value="Helicase_C-like"/>
</dbReference>
<dbReference type="InterPro" id="IPR027417">
    <property type="entry name" value="P-loop_NTPase"/>
</dbReference>
<dbReference type="InterPro" id="IPR014014">
    <property type="entry name" value="RNA_helicase_DEAD_Q_motif"/>
</dbReference>
<dbReference type="PANTHER" id="PTHR47958">
    <property type="entry name" value="ATP-DEPENDENT RNA HELICASE DBP3"/>
    <property type="match status" value="1"/>
</dbReference>
<dbReference type="Pfam" id="PF00270">
    <property type="entry name" value="DEAD"/>
    <property type="match status" value="1"/>
</dbReference>
<dbReference type="Pfam" id="PF00271">
    <property type="entry name" value="Helicase_C"/>
    <property type="match status" value="1"/>
</dbReference>
<dbReference type="SMART" id="SM00487">
    <property type="entry name" value="DEXDc"/>
    <property type="match status" value="1"/>
</dbReference>
<dbReference type="SMART" id="SM00490">
    <property type="entry name" value="HELICc"/>
    <property type="match status" value="1"/>
</dbReference>
<dbReference type="SUPFAM" id="SSF52540">
    <property type="entry name" value="P-loop containing nucleoside triphosphate hydrolases"/>
    <property type="match status" value="1"/>
</dbReference>
<dbReference type="PROSITE" id="PS51192">
    <property type="entry name" value="HELICASE_ATP_BIND_1"/>
    <property type="match status" value="1"/>
</dbReference>
<dbReference type="PROSITE" id="PS51194">
    <property type="entry name" value="HELICASE_CTER"/>
    <property type="match status" value="1"/>
</dbReference>
<dbReference type="PROSITE" id="PS51195">
    <property type="entry name" value="Q_MOTIF"/>
    <property type="match status" value="1"/>
</dbReference>
<evidence type="ECO:0000255" key="1">
    <source>
        <dbReference type="PROSITE-ProRule" id="PRU00541"/>
    </source>
</evidence>
<evidence type="ECO:0000255" key="2">
    <source>
        <dbReference type="PROSITE-ProRule" id="PRU00542"/>
    </source>
</evidence>
<evidence type="ECO:0000256" key="3">
    <source>
        <dbReference type="SAM" id="MobiDB-lite"/>
    </source>
</evidence>
<evidence type="ECO:0000305" key="4"/>
<evidence type="ECO:0000312" key="5">
    <source>
        <dbReference type="EMBL" id="EEE60132.1"/>
    </source>
</evidence>
<gene>
    <name type="primary">PL10A</name>
    <name type="ordered locus">Os03g0805200</name>
    <name type="ordered locus">LOC_Os03g59050</name>
    <name evidence="5" type="ORF">OsJ_13017</name>
    <name type="ORF">OSJNBb0015I02.14</name>
</gene>
<organism>
    <name type="scientific">Oryza sativa subsp. japonica</name>
    <name type="common">Rice</name>
    <dbReference type="NCBI Taxonomy" id="39947"/>
    <lineage>
        <taxon>Eukaryota</taxon>
        <taxon>Viridiplantae</taxon>
        <taxon>Streptophyta</taxon>
        <taxon>Embryophyta</taxon>
        <taxon>Tracheophyta</taxon>
        <taxon>Spermatophyta</taxon>
        <taxon>Magnoliopsida</taxon>
        <taxon>Liliopsida</taxon>
        <taxon>Poales</taxon>
        <taxon>Poaceae</taxon>
        <taxon>BOP clade</taxon>
        <taxon>Oryzoideae</taxon>
        <taxon>Oryzeae</taxon>
        <taxon>Oryzinae</taxon>
        <taxon>Oryza</taxon>
        <taxon>Oryza sativa</taxon>
    </lineage>
</organism>
<comment type="catalytic activity">
    <reaction>
        <text>ATP + H2O = ADP + phosphate + H(+)</text>
        <dbReference type="Rhea" id="RHEA:13065"/>
        <dbReference type="ChEBI" id="CHEBI:15377"/>
        <dbReference type="ChEBI" id="CHEBI:15378"/>
        <dbReference type="ChEBI" id="CHEBI:30616"/>
        <dbReference type="ChEBI" id="CHEBI:43474"/>
        <dbReference type="ChEBI" id="CHEBI:456216"/>
        <dbReference type="EC" id="3.6.4.13"/>
    </reaction>
</comment>
<comment type="domain">
    <text>The Q motif is unique to and characteristic of the DEAD box family of RNA helicases and controls ATP binding and hydrolysis.</text>
</comment>
<comment type="similarity">
    <text evidence="4">Belongs to the DEAD box helicase family. DDX3/DED1 subfamily.</text>
</comment>
<keyword id="KW-0067">ATP-binding</keyword>
<keyword id="KW-0347">Helicase</keyword>
<keyword id="KW-0378">Hydrolase</keyword>
<keyword id="KW-0547">Nucleotide-binding</keyword>
<keyword id="KW-1185">Reference proteome</keyword>
<keyword id="KW-0694">RNA-binding</keyword>
<protein>
    <recommendedName>
        <fullName>DEAD-box ATP-dependent RNA helicase 37</fullName>
        <ecNumber>3.6.4.13</ecNumber>
    </recommendedName>
    <alternativeName>
        <fullName>OsPL10a</fullName>
    </alternativeName>
</protein>
<reference key="1">
    <citation type="journal article" date="2005" name="Genome Res.">
        <title>Sequence, annotation, and analysis of synteny between rice chromosome 3 and diverged grass species.</title>
        <authorList>
            <consortium name="The rice chromosome 3 sequencing consortium"/>
            <person name="Buell C.R."/>
            <person name="Yuan Q."/>
            <person name="Ouyang S."/>
            <person name="Liu J."/>
            <person name="Zhu W."/>
            <person name="Wang A."/>
            <person name="Maiti R."/>
            <person name="Haas B."/>
            <person name="Wortman J."/>
            <person name="Pertea M."/>
            <person name="Jones K.M."/>
            <person name="Kim M."/>
            <person name="Overton L."/>
            <person name="Tsitrin T."/>
            <person name="Fadrosh D."/>
            <person name="Bera J."/>
            <person name="Weaver B."/>
            <person name="Jin S."/>
            <person name="Johri S."/>
            <person name="Reardon M."/>
            <person name="Webb K."/>
            <person name="Hill J."/>
            <person name="Moffat K."/>
            <person name="Tallon L."/>
            <person name="Van Aken S."/>
            <person name="Lewis M."/>
            <person name="Utterback T."/>
            <person name="Feldblyum T."/>
            <person name="Zismann V."/>
            <person name="Iobst S."/>
            <person name="Hsiao J."/>
            <person name="de Vazeille A.R."/>
            <person name="Salzberg S.L."/>
            <person name="White O."/>
            <person name="Fraser C.M."/>
            <person name="Yu Y."/>
            <person name="Kim H."/>
            <person name="Rambo T."/>
            <person name="Currie J."/>
            <person name="Collura K."/>
            <person name="Kernodle-Thompson S."/>
            <person name="Wei F."/>
            <person name="Kudrna K."/>
            <person name="Ammiraju J.S.S."/>
            <person name="Luo M."/>
            <person name="Goicoechea J.L."/>
            <person name="Wing R.A."/>
            <person name="Henry D."/>
            <person name="Oates R."/>
            <person name="Palmer M."/>
            <person name="Pries G."/>
            <person name="Saski C."/>
            <person name="Simmons J."/>
            <person name="Soderlund C."/>
            <person name="Nelson W."/>
            <person name="de la Bastide M."/>
            <person name="Spiegel L."/>
            <person name="Nascimento L."/>
            <person name="Huang E."/>
            <person name="Preston R."/>
            <person name="Zutavern T."/>
            <person name="Palmer L."/>
            <person name="O'Shaughnessy A."/>
            <person name="Dike S."/>
            <person name="McCombie W.R."/>
            <person name="Minx P."/>
            <person name="Cordum H."/>
            <person name="Wilson R."/>
            <person name="Jin W."/>
            <person name="Lee H.R."/>
            <person name="Jiang J."/>
            <person name="Jackson S."/>
        </authorList>
    </citation>
    <scope>NUCLEOTIDE SEQUENCE [LARGE SCALE GENOMIC DNA]</scope>
    <source>
        <strain>cv. Nipponbare</strain>
    </source>
</reference>
<reference key="2">
    <citation type="journal article" date="2005" name="Nature">
        <title>The map-based sequence of the rice genome.</title>
        <authorList>
            <consortium name="International rice genome sequencing project (IRGSP)"/>
        </authorList>
    </citation>
    <scope>NUCLEOTIDE SEQUENCE [LARGE SCALE GENOMIC DNA]</scope>
    <source>
        <strain>cv. Nipponbare</strain>
    </source>
</reference>
<reference key="3">
    <citation type="journal article" date="2008" name="Nucleic Acids Res.">
        <title>The rice annotation project database (RAP-DB): 2008 update.</title>
        <authorList>
            <consortium name="The rice annotation project (RAP)"/>
        </authorList>
    </citation>
    <scope>GENOME REANNOTATION</scope>
    <source>
        <strain>cv. Nipponbare</strain>
    </source>
</reference>
<reference key="4">
    <citation type="journal article" date="2013" name="Rice">
        <title>Improvement of the Oryza sativa Nipponbare reference genome using next generation sequence and optical map data.</title>
        <authorList>
            <person name="Kawahara Y."/>
            <person name="de la Bastide M."/>
            <person name="Hamilton J.P."/>
            <person name="Kanamori H."/>
            <person name="McCombie W.R."/>
            <person name="Ouyang S."/>
            <person name="Schwartz D.C."/>
            <person name="Tanaka T."/>
            <person name="Wu J."/>
            <person name="Zhou S."/>
            <person name="Childs K.L."/>
            <person name="Davidson R.M."/>
            <person name="Lin H."/>
            <person name="Quesada-Ocampo L."/>
            <person name="Vaillancourt B."/>
            <person name="Sakai H."/>
            <person name="Lee S.S."/>
            <person name="Kim J."/>
            <person name="Numa H."/>
            <person name="Itoh T."/>
            <person name="Buell C.R."/>
            <person name="Matsumoto T."/>
        </authorList>
    </citation>
    <scope>GENOME REANNOTATION</scope>
    <source>
        <strain>cv. Nipponbare</strain>
    </source>
</reference>
<reference key="5">
    <citation type="journal article" date="2005" name="PLoS Biol.">
        <title>The genomes of Oryza sativa: a history of duplications.</title>
        <authorList>
            <person name="Yu J."/>
            <person name="Wang J."/>
            <person name="Lin W."/>
            <person name="Li S."/>
            <person name="Li H."/>
            <person name="Zhou J."/>
            <person name="Ni P."/>
            <person name="Dong W."/>
            <person name="Hu S."/>
            <person name="Zeng C."/>
            <person name="Zhang J."/>
            <person name="Zhang Y."/>
            <person name="Li R."/>
            <person name="Xu Z."/>
            <person name="Li S."/>
            <person name="Li X."/>
            <person name="Zheng H."/>
            <person name="Cong L."/>
            <person name="Lin L."/>
            <person name="Yin J."/>
            <person name="Geng J."/>
            <person name="Li G."/>
            <person name="Shi J."/>
            <person name="Liu J."/>
            <person name="Lv H."/>
            <person name="Li J."/>
            <person name="Wang J."/>
            <person name="Deng Y."/>
            <person name="Ran L."/>
            <person name="Shi X."/>
            <person name="Wang X."/>
            <person name="Wu Q."/>
            <person name="Li C."/>
            <person name="Ren X."/>
            <person name="Wang J."/>
            <person name="Wang X."/>
            <person name="Li D."/>
            <person name="Liu D."/>
            <person name="Zhang X."/>
            <person name="Ji Z."/>
            <person name="Zhao W."/>
            <person name="Sun Y."/>
            <person name="Zhang Z."/>
            <person name="Bao J."/>
            <person name="Han Y."/>
            <person name="Dong L."/>
            <person name="Ji J."/>
            <person name="Chen P."/>
            <person name="Wu S."/>
            <person name="Liu J."/>
            <person name="Xiao Y."/>
            <person name="Bu D."/>
            <person name="Tan J."/>
            <person name="Yang L."/>
            <person name="Ye C."/>
            <person name="Zhang J."/>
            <person name="Xu J."/>
            <person name="Zhou Y."/>
            <person name="Yu Y."/>
            <person name="Zhang B."/>
            <person name="Zhuang S."/>
            <person name="Wei H."/>
            <person name="Liu B."/>
            <person name="Lei M."/>
            <person name="Yu H."/>
            <person name="Li Y."/>
            <person name="Xu H."/>
            <person name="Wei S."/>
            <person name="He X."/>
            <person name="Fang L."/>
            <person name="Zhang Z."/>
            <person name="Zhang Y."/>
            <person name="Huang X."/>
            <person name="Su Z."/>
            <person name="Tong W."/>
            <person name="Li J."/>
            <person name="Tong Z."/>
            <person name="Li S."/>
            <person name="Ye J."/>
            <person name="Wang L."/>
            <person name="Fang L."/>
            <person name="Lei T."/>
            <person name="Chen C.-S."/>
            <person name="Chen H.-C."/>
            <person name="Xu Z."/>
            <person name="Li H."/>
            <person name="Huang H."/>
            <person name="Zhang F."/>
            <person name="Xu H."/>
            <person name="Li N."/>
            <person name="Zhao C."/>
            <person name="Li S."/>
            <person name="Dong L."/>
            <person name="Huang Y."/>
            <person name="Li L."/>
            <person name="Xi Y."/>
            <person name="Qi Q."/>
            <person name="Li W."/>
            <person name="Zhang B."/>
            <person name="Hu W."/>
            <person name="Zhang Y."/>
            <person name="Tian X."/>
            <person name="Jiao Y."/>
            <person name="Liang X."/>
            <person name="Jin J."/>
            <person name="Gao L."/>
            <person name="Zheng W."/>
            <person name="Hao B."/>
            <person name="Liu S.-M."/>
            <person name="Wang W."/>
            <person name="Yuan L."/>
            <person name="Cao M."/>
            <person name="McDermott J."/>
            <person name="Samudrala R."/>
            <person name="Wang J."/>
            <person name="Wong G.K.-S."/>
            <person name="Yang H."/>
        </authorList>
    </citation>
    <scope>NUCLEOTIDE SEQUENCE [LARGE SCALE GENOMIC DNA]</scope>
    <source>
        <strain>cv. Nipponbare</strain>
    </source>
</reference>
<reference key="6">
    <citation type="journal article" date="2003" name="Science">
        <title>Collection, mapping, and annotation of over 28,000 cDNA clones from japonica rice.</title>
        <authorList>
            <consortium name="The rice full-length cDNA consortium"/>
        </authorList>
    </citation>
    <scope>NUCLEOTIDE SEQUENCE [LARGE SCALE MRNA]</scope>
    <source>
        <strain>cv. Nipponbare</strain>
    </source>
</reference>
<reference key="7">
    <citation type="submission" date="2000-05" db="EMBL/GenBank/DDBJ databases">
        <title>PL10-like genes in rice.</title>
        <authorList>
            <person name="Mochizuki K."/>
        </authorList>
    </citation>
    <scope>NUCLEOTIDE SEQUENCE [MRNA] OF 222-335</scope>
</reference>
<sequence length="637" mass="67666">MRSSWADSVANAEESAPATGAAPTPVANHQNSRPTRSAYVPPHLRGQAPTTTAAPAPAPGPAAVQPSASVQPSGYAAIVGGSRWAGPASGDGTGAVGGPRQSVGGRGGGGGGGGGWNSRPGWDRRDREPNPFANSEAEEATEVDFDTANTGINFDAYEDIPVETSGHDVPPPVNTFAEIDLGDALNENIRRCKYVKPTPVQRYAIPISIAGRDLMACAQTGSGKTAAFCFPIISGIMSSRPPQRPRGSRTAYPLALILSPTRELSVQIHEEARKFAYQTGVRVVVAYGGAPIHQQLRELERGVEILVATPGRLMDLLERARVSLQMVKYLALDEADRMLDMGFEPQIRKIVEQMDMPPRGVRQTMLFSATFPKEIQRMASDFLADYIFLAVGRVGSSTDLIAQRVEFVLEADKRSYLMDLLHAQKANGTHGKQALTLVFVETKRGADALENWLYTNGFPATSIHGDRTQQEREYALRSFKSGATPILVATDVAARGLDIPHVAHVINFDLPNDIDDYVHRIGRTGRAGKSGLATAFFNEGNLSLARPLCELMQEANQEVPQWLERYSARSSFGGGGGRNRRSGGARFGGRDFRRDNRGGGGGGYGGGGGGYGGGGYGGGGGYGGGYGGGQGSTSSWD</sequence>